<sequence>MTNEFHHVTVLLHEAVDMLDIKPDGIYVDATLGGSGHSAYLLSLLGDKGHLYCFDQDQKAIDHAQEQLKPYIDKGQVTFIKDNFRHLKARLLEHGVTEIDGILYDLGVSSPQLDERERGFSYKQDAPLDMRMDSQAALTAYEVVNTYDFNDLVRIFFKYGEDKFSKQIARKIEQARAIKPISTTTELAALIKSAKPAKELKKKGHPAKQIFQAIRIEVNDELGAADASIQQAIELLALDGRISVITFHSLEDRLTKHLFKEASTADAPKGLPFIPDELKPKLELVSRKPILPSQKELMANNRAHSAKLRVARKVRK</sequence>
<gene>
    <name evidence="1" type="primary">rsmH</name>
    <name type="synonym">mraW</name>
    <name type="ordered locus">Sez_1588</name>
</gene>
<protein>
    <recommendedName>
        <fullName evidence="1">Ribosomal RNA small subunit methyltransferase H</fullName>
        <ecNumber evidence="1">2.1.1.199</ecNumber>
    </recommendedName>
    <alternativeName>
        <fullName evidence="1">16S rRNA m(4)C1402 methyltransferase</fullName>
    </alternativeName>
    <alternativeName>
        <fullName evidence="1">rRNA (cytosine-N(4)-)-methyltransferase RsmH</fullName>
    </alternativeName>
</protein>
<name>RSMH_STREM</name>
<organism>
    <name type="scientific">Streptococcus equi subsp. zooepidemicus (strain MGCS10565)</name>
    <dbReference type="NCBI Taxonomy" id="552526"/>
    <lineage>
        <taxon>Bacteria</taxon>
        <taxon>Bacillati</taxon>
        <taxon>Bacillota</taxon>
        <taxon>Bacilli</taxon>
        <taxon>Lactobacillales</taxon>
        <taxon>Streptococcaceae</taxon>
        <taxon>Streptococcus</taxon>
    </lineage>
</organism>
<dbReference type="EC" id="2.1.1.199" evidence="1"/>
<dbReference type="EMBL" id="CP001129">
    <property type="protein sequence ID" value="ACG62921.1"/>
    <property type="molecule type" value="Genomic_DNA"/>
</dbReference>
<dbReference type="RefSeq" id="WP_012516177.1">
    <property type="nucleotide sequence ID" value="NC_011134.1"/>
</dbReference>
<dbReference type="SMR" id="B4U4K4"/>
<dbReference type="KEGG" id="sez:Sez_1588"/>
<dbReference type="HOGENOM" id="CLU_038422_2_0_9"/>
<dbReference type="Proteomes" id="UP000001873">
    <property type="component" value="Chromosome"/>
</dbReference>
<dbReference type="GO" id="GO:0005737">
    <property type="term" value="C:cytoplasm"/>
    <property type="evidence" value="ECO:0007669"/>
    <property type="project" value="UniProtKB-SubCell"/>
</dbReference>
<dbReference type="GO" id="GO:0071424">
    <property type="term" value="F:rRNA (cytosine-N4-)-methyltransferase activity"/>
    <property type="evidence" value="ECO:0007669"/>
    <property type="project" value="UniProtKB-UniRule"/>
</dbReference>
<dbReference type="GO" id="GO:0070475">
    <property type="term" value="P:rRNA base methylation"/>
    <property type="evidence" value="ECO:0007669"/>
    <property type="project" value="UniProtKB-UniRule"/>
</dbReference>
<dbReference type="FunFam" id="1.10.150.170:FF:000001">
    <property type="entry name" value="Ribosomal RNA small subunit methyltransferase H"/>
    <property type="match status" value="1"/>
</dbReference>
<dbReference type="Gene3D" id="1.10.150.170">
    <property type="entry name" value="Putative methyltransferase TM0872, insert domain"/>
    <property type="match status" value="1"/>
</dbReference>
<dbReference type="Gene3D" id="3.40.50.150">
    <property type="entry name" value="Vaccinia Virus protein VP39"/>
    <property type="match status" value="1"/>
</dbReference>
<dbReference type="HAMAP" id="MF_01007">
    <property type="entry name" value="16SrRNA_methyltr_H"/>
    <property type="match status" value="1"/>
</dbReference>
<dbReference type="InterPro" id="IPR002903">
    <property type="entry name" value="RsmH"/>
</dbReference>
<dbReference type="InterPro" id="IPR023397">
    <property type="entry name" value="SAM-dep_MeTrfase_MraW_recog"/>
</dbReference>
<dbReference type="InterPro" id="IPR029063">
    <property type="entry name" value="SAM-dependent_MTases_sf"/>
</dbReference>
<dbReference type="NCBIfam" id="TIGR00006">
    <property type="entry name" value="16S rRNA (cytosine(1402)-N(4))-methyltransferase RsmH"/>
    <property type="match status" value="1"/>
</dbReference>
<dbReference type="PANTHER" id="PTHR11265:SF0">
    <property type="entry name" value="12S RRNA N4-METHYLCYTIDINE METHYLTRANSFERASE"/>
    <property type="match status" value="1"/>
</dbReference>
<dbReference type="PANTHER" id="PTHR11265">
    <property type="entry name" value="S-ADENOSYL-METHYLTRANSFERASE MRAW"/>
    <property type="match status" value="1"/>
</dbReference>
<dbReference type="Pfam" id="PF01795">
    <property type="entry name" value="Methyltransf_5"/>
    <property type="match status" value="1"/>
</dbReference>
<dbReference type="PIRSF" id="PIRSF004486">
    <property type="entry name" value="MraW"/>
    <property type="match status" value="1"/>
</dbReference>
<dbReference type="SUPFAM" id="SSF81799">
    <property type="entry name" value="Putative methyltransferase TM0872, insert domain"/>
    <property type="match status" value="1"/>
</dbReference>
<dbReference type="SUPFAM" id="SSF53335">
    <property type="entry name" value="S-adenosyl-L-methionine-dependent methyltransferases"/>
    <property type="match status" value="1"/>
</dbReference>
<reference key="1">
    <citation type="journal article" date="2008" name="PLoS ONE">
        <title>Genome sequence of a lancefield group C Streptococcus zooepidemicus strain causing epidemic nephritis: new information about an old disease.</title>
        <authorList>
            <person name="Beres S.B."/>
            <person name="Sesso R."/>
            <person name="Pinto S.W.L."/>
            <person name="Hoe N.P."/>
            <person name="Porcella S.F."/>
            <person name="Deleo F.R."/>
            <person name="Musser J.M."/>
        </authorList>
    </citation>
    <scope>NUCLEOTIDE SEQUENCE [LARGE SCALE GENOMIC DNA]</scope>
    <source>
        <strain>MGCS10565</strain>
    </source>
</reference>
<keyword id="KW-0963">Cytoplasm</keyword>
<keyword id="KW-0489">Methyltransferase</keyword>
<keyword id="KW-0698">rRNA processing</keyword>
<keyword id="KW-0949">S-adenosyl-L-methionine</keyword>
<keyword id="KW-0808">Transferase</keyword>
<comment type="function">
    <text evidence="1">Specifically methylates the N4 position of cytidine in position 1402 (C1402) of 16S rRNA.</text>
</comment>
<comment type="catalytic activity">
    <reaction evidence="1">
        <text>cytidine(1402) in 16S rRNA + S-adenosyl-L-methionine = N(4)-methylcytidine(1402) in 16S rRNA + S-adenosyl-L-homocysteine + H(+)</text>
        <dbReference type="Rhea" id="RHEA:42928"/>
        <dbReference type="Rhea" id="RHEA-COMP:10286"/>
        <dbReference type="Rhea" id="RHEA-COMP:10287"/>
        <dbReference type="ChEBI" id="CHEBI:15378"/>
        <dbReference type="ChEBI" id="CHEBI:57856"/>
        <dbReference type="ChEBI" id="CHEBI:59789"/>
        <dbReference type="ChEBI" id="CHEBI:74506"/>
        <dbReference type="ChEBI" id="CHEBI:82748"/>
        <dbReference type="EC" id="2.1.1.199"/>
    </reaction>
</comment>
<comment type="subcellular location">
    <subcellularLocation>
        <location evidence="1">Cytoplasm</location>
    </subcellularLocation>
</comment>
<comment type="similarity">
    <text evidence="1">Belongs to the methyltransferase superfamily. RsmH family.</text>
</comment>
<accession>B4U4K4</accession>
<feature type="chain" id="PRO_0000387147" description="Ribosomal RNA small subunit methyltransferase H">
    <location>
        <begin position="1"/>
        <end position="316"/>
    </location>
</feature>
<feature type="binding site" evidence="1">
    <location>
        <begin position="35"/>
        <end position="37"/>
    </location>
    <ligand>
        <name>S-adenosyl-L-methionine</name>
        <dbReference type="ChEBI" id="CHEBI:59789"/>
    </ligand>
</feature>
<feature type="binding site" evidence="1">
    <location>
        <position position="55"/>
    </location>
    <ligand>
        <name>S-adenosyl-L-methionine</name>
        <dbReference type="ChEBI" id="CHEBI:59789"/>
    </ligand>
</feature>
<feature type="binding site" evidence="1">
    <location>
        <position position="84"/>
    </location>
    <ligand>
        <name>S-adenosyl-L-methionine</name>
        <dbReference type="ChEBI" id="CHEBI:59789"/>
    </ligand>
</feature>
<feature type="binding site" evidence="1">
    <location>
        <position position="105"/>
    </location>
    <ligand>
        <name>S-adenosyl-L-methionine</name>
        <dbReference type="ChEBI" id="CHEBI:59789"/>
    </ligand>
</feature>
<feature type="binding site" evidence="1">
    <location>
        <position position="112"/>
    </location>
    <ligand>
        <name>S-adenosyl-L-methionine</name>
        <dbReference type="ChEBI" id="CHEBI:59789"/>
    </ligand>
</feature>
<evidence type="ECO:0000255" key="1">
    <source>
        <dbReference type="HAMAP-Rule" id="MF_01007"/>
    </source>
</evidence>
<proteinExistence type="inferred from homology"/>